<feature type="chain" id="PRO_0000046381" description="Phospholipid-transporting ATPase VB">
    <location>
        <begin position="1"/>
        <end position="1461"/>
    </location>
</feature>
<feature type="topological domain" description="Cytoplasmic" evidence="5">
    <location>
        <begin position="1"/>
        <end position="82"/>
    </location>
</feature>
<feature type="transmembrane region" description="Helical" evidence="5">
    <location>
        <begin position="83"/>
        <end position="104"/>
    </location>
</feature>
<feature type="topological domain" description="Exoplasmic loop" evidence="5">
    <location>
        <begin position="105"/>
        <end position="110"/>
    </location>
</feature>
<feature type="transmembrane region" description="Helical" evidence="5">
    <location>
        <begin position="111"/>
        <end position="132"/>
    </location>
</feature>
<feature type="topological domain" description="Cytoplasmic" evidence="5">
    <location>
        <begin position="133"/>
        <end position="316"/>
    </location>
</feature>
<feature type="transmembrane region" description="Helical" evidence="5">
    <location>
        <begin position="317"/>
        <end position="338"/>
    </location>
</feature>
<feature type="topological domain" description="Exoplasmic loop" evidence="5">
    <location>
        <begin position="339"/>
        <end position="368"/>
    </location>
</feature>
<feature type="transmembrane region" description="Helical" evidence="5">
    <location>
        <begin position="369"/>
        <end position="390"/>
    </location>
</feature>
<feature type="topological domain" description="Cytoplasmic" evidence="5">
    <location>
        <begin position="391"/>
        <end position="1111"/>
    </location>
</feature>
<feature type="transmembrane region" description="Helical" evidence="5">
    <location>
        <begin position="1112"/>
        <end position="1132"/>
    </location>
</feature>
<feature type="topological domain" description="Exoplasmic loop" evidence="5">
    <location>
        <begin position="1133"/>
        <end position="1144"/>
    </location>
</feature>
<feature type="transmembrane region" description="Helical" evidence="5">
    <location>
        <begin position="1145"/>
        <end position="1164"/>
    </location>
</feature>
<feature type="topological domain" description="Cytoplasmic" evidence="5">
    <location>
        <begin position="1165"/>
        <end position="1194"/>
    </location>
</feature>
<feature type="transmembrane region" description="Helical" evidence="5">
    <location>
        <begin position="1195"/>
        <end position="1216"/>
    </location>
</feature>
<feature type="topological domain" description="Exoplasmic loop" evidence="5">
    <location>
        <begin position="1217"/>
        <end position="1223"/>
    </location>
</feature>
<feature type="transmembrane region" description="Helical" evidence="5">
    <location>
        <begin position="1224"/>
        <end position="1246"/>
    </location>
</feature>
<feature type="topological domain" description="Cytoplasmic" evidence="5">
    <location>
        <begin position="1247"/>
        <end position="1252"/>
    </location>
</feature>
<feature type="transmembrane region" description="Helical" evidence="5">
    <location>
        <begin position="1253"/>
        <end position="1273"/>
    </location>
</feature>
<feature type="topological domain" description="Exoplasmic loop" evidence="5">
    <location>
        <begin position="1274"/>
        <end position="1291"/>
    </location>
</feature>
<feature type="transmembrane region" description="Helical" evidence="5">
    <location>
        <begin position="1292"/>
        <end position="1316"/>
    </location>
</feature>
<feature type="topological domain" description="Cytoplasmic" evidence="5">
    <location>
        <begin position="1317"/>
        <end position="1461"/>
    </location>
</feature>
<feature type="region of interest" description="Disordered" evidence="6">
    <location>
        <begin position="496"/>
        <end position="541"/>
    </location>
</feature>
<feature type="region of interest" description="Disordered" evidence="6">
    <location>
        <begin position="640"/>
        <end position="687"/>
    </location>
</feature>
<feature type="region of interest" description="Disordered" evidence="6">
    <location>
        <begin position="1346"/>
        <end position="1397"/>
    </location>
</feature>
<feature type="compositionally biased region" description="Polar residues" evidence="6">
    <location>
        <begin position="496"/>
        <end position="511"/>
    </location>
</feature>
<feature type="compositionally biased region" description="Polar residues" evidence="6">
    <location>
        <begin position="530"/>
        <end position="539"/>
    </location>
</feature>
<feature type="compositionally biased region" description="Polar residues" evidence="6">
    <location>
        <begin position="1368"/>
        <end position="1387"/>
    </location>
</feature>
<feature type="active site" description="4-aspartylphosphate intermediate" evidence="3 14">
    <location>
        <position position="433"/>
    </location>
</feature>
<feature type="binding site" evidence="4">
    <location>
        <position position="433"/>
    </location>
    <ligand>
        <name>ATP</name>
        <dbReference type="ChEBI" id="CHEBI:30616"/>
    </ligand>
</feature>
<feature type="binding site" evidence="4">
    <location>
        <position position="433"/>
    </location>
    <ligand>
        <name>Mg(2+)</name>
        <dbReference type="ChEBI" id="CHEBI:18420"/>
    </ligand>
</feature>
<feature type="binding site" evidence="4">
    <location>
        <position position="434"/>
    </location>
    <ligand>
        <name>ATP</name>
        <dbReference type="ChEBI" id="CHEBI:30616"/>
    </ligand>
</feature>
<feature type="binding site" evidence="4">
    <location>
        <position position="435"/>
    </location>
    <ligand>
        <name>ATP</name>
        <dbReference type="ChEBI" id="CHEBI:30616"/>
    </ligand>
</feature>
<feature type="binding site" evidence="4">
    <location>
        <position position="435"/>
    </location>
    <ligand>
        <name>Mg(2+)</name>
        <dbReference type="ChEBI" id="CHEBI:18420"/>
    </ligand>
</feature>
<feature type="binding site" evidence="1">
    <location>
        <position position="724"/>
    </location>
    <ligand>
        <name>ATP</name>
        <dbReference type="ChEBI" id="CHEBI:30616"/>
    </ligand>
</feature>
<feature type="binding site" evidence="4">
    <location>
        <position position="766"/>
    </location>
    <ligand>
        <name>ATP</name>
        <dbReference type="ChEBI" id="CHEBI:30616"/>
    </ligand>
</feature>
<feature type="binding site" evidence="1">
    <location>
        <position position="790"/>
    </location>
    <ligand>
        <name>ATP</name>
        <dbReference type="ChEBI" id="CHEBI:30616"/>
    </ligand>
</feature>
<feature type="binding site" evidence="1">
    <location>
        <position position="835"/>
    </location>
    <ligand>
        <name>ATP</name>
        <dbReference type="ChEBI" id="CHEBI:30616"/>
    </ligand>
</feature>
<feature type="binding site" evidence="1">
    <location>
        <position position="915"/>
    </location>
    <ligand>
        <name>ATP</name>
        <dbReference type="ChEBI" id="CHEBI:30616"/>
    </ligand>
</feature>
<feature type="binding site" evidence="1">
    <location>
        <position position="916"/>
    </location>
    <ligand>
        <name>ATP</name>
        <dbReference type="ChEBI" id="CHEBI:30616"/>
    </ligand>
</feature>
<feature type="binding site" evidence="1">
    <location>
        <position position="917"/>
    </location>
    <ligand>
        <name>ATP</name>
        <dbReference type="ChEBI" id="CHEBI:30616"/>
    </ligand>
</feature>
<feature type="binding site" evidence="1">
    <location>
        <position position="1029"/>
    </location>
    <ligand>
        <name>ATP</name>
        <dbReference type="ChEBI" id="CHEBI:30616"/>
    </ligand>
</feature>
<feature type="binding site" evidence="1">
    <location>
        <position position="1035"/>
    </location>
    <ligand>
        <name>ATP</name>
        <dbReference type="ChEBI" id="CHEBI:30616"/>
    </ligand>
</feature>
<feature type="binding site" evidence="2">
    <location>
        <position position="1055"/>
    </location>
    <ligand>
        <name>Mg(2+)</name>
        <dbReference type="ChEBI" id="CHEBI:18420"/>
    </ligand>
</feature>
<feature type="binding site" evidence="4">
    <location>
        <position position="1058"/>
    </location>
    <ligand>
        <name>ATP</name>
        <dbReference type="ChEBI" id="CHEBI:30616"/>
    </ligand>
</feature>
<feature type="binding site" evidence="4">
    <location>
        <position position="1059"/>
    </location>
    <ligand>
        <name>ATP</name>
        <dbReference type="ChEBI" id="CHEBI:30616"/>
    </ligand>
</feature>
<feature type="binding site" evidence="2">
    <location>
        <position position="1059"/>
    </location>
    <ligand>
        <name>Mg(2+)</name>
        <dbReference type="ChEBI" id="CHEBI:18420"/>
    </ligand>
</feature>
<feature type="splice variant" id="VSP_007305" description="In isoform C." evidence="11">
    <original>MALSVDSSWHRWQWRVRDGFPHCPSETTPLLSPEKGRQSYNLTQQRVVFPNNSIFHQDWEEVSRRYPGNRTCTTKYTLFTFLPRNLFEQFHRWANLYFLFLVILNWMPSMEVFHREITMLPLAIVLFVIMIKDGMEDFKRHRFDKAINCSNIRIYE</original>
    <variation>MKKEGRKRWKRKEDKKRVVVSNLLFEGWSHKENPNRHHRGNQIKTSKYTVLSFVPKNIFEQLHRFANLYFVGIAVLNFIPVVNAFQPEVSMIPICVILAVTAIKDAWEDLRRYKSDKVINNRECLIYS</variation>
    <location>
        <begin position="1"/>
        <end position="156"/>
    </location>
</feature>
<feature type="splice variant" id="VSP_007306" description="In isoform B and isoform C." evidence="11">
    <original>AKRLETPKELDSDGEEWTQYQCLSFSARWAQDPATMRSQKGAQPLRRSQSARVPIQGHYRQRSMGHRES</original>
    <variation>GIEAPKGSIPLSKRKYPALLRNEEIKDILLALLEAVWHFHKLLPVSLWSSLSQIRAVPITCKLSFVYKG</variation>
    <location>
        <begin position="461"/>
        <end position="529"/>
    </location>
</feature>
<feature type="splice variant" id="VSP_007307" description="In isoform B and isoform C." evidence="11">
    <location>
        <begin position="530"/>
        <end position="1461"/>
    </location>
</feature>
<feature type="sequence variant" id="VAR_084141" description="Found in a patient with early-onset Parkinson disease; uncertain significance; dbSNP:rs184217288." evidence="9">
    <original>N</original>
    <variation>S</variation>
    <location>
        <position position="105"/>
    </location>
</feature>
<feature type="sequence variant" id="VAR_084142" description="Found in a patient with early-onset Parkinson disease; uncertain significance; loss of protein expression and loss-of-function." evidence="9">
    <location>
        <begin position="153"/>
        <end position="1461"/>
    </location>
</feature>
<feature type="sequence variant" id="VAR_084143" description="Found in patients with early-onset Parkinson disease; uncertain significance; impaired ATPase flippase activity; dbSNP:rs73306687." evidence="9">
    <original>T</original>
    <variation>N</variation>
    <location>
        <position position="161"/>
    </location>
</feature>
<feature type="sequence variant" id="VAR_048384" description="In dbSNP:rs958912." evidence="7">
    <original>C</original>
    <variation>R</variation>
    <location>
        <position position="217"/>
    </location>
</feature>
<feature type="sequence variant" id="VAR_084190" description="Found in a family with Parkinson disease; uncertain significance; dbSNP:rs139187738." evidence="10">
    <original>V</original>
    <variation>M</variation>
    <location>
        <position position="219"/>
    </location>
</feature>
<feature type="sequence variant" id="VAR_084144" description="Impaired ATPase flippase activity; dbSNP:rs149397148." evidence="9">
    <original>G</original>
    <variation>W</variation>
    <location>
        <position position="393"/>
    </location>
</feature>
<feature type="sequence variant" id="VAR_084191" description="Found in a family with Parkinson disease; uncertain significance; dbSNP:rs56340994." evidence="10">
    <original>I</original>
    <variation>T</variation>
    <location>
        <position position="540"/>
    </location>
</feature>
<feature type="sequence variant" id="VAR_084145" description="Found in a patient with early-onset Parkinson disease; uncertain significance; dbSNP:rs770267845." evidence="9">
    <original>A</original>
    <variation>V</variation>
    <location>
        <position position="558"/>
    </location>
</feature>
<feature type="sequence variant" id="VAR_084146" description="Found in patients with early-onset Parkinson disease; uncertain significance; impaired ATPase flippase activity; dbSNP:rs188580726." evidence="9">
    <original>G</original>
    <variation>R</variation>
    <location>
        <position position="648"/>
    </location>
</feature>
<feature type="sequence variant" id="VAR_084147" description="Found in patients with early-onset Parkinson disease; uncertain significance; impaired ATPase flippase activity; dbSNP:rs61734666." evidence="9 10">
    <original>G</original>
    <variation>R</variation>
    <location>
        <position position="671"/>
    </location>
</feature>
<feature type="sequence variant" id="VAR_084148" description="Found in a patient with early-onset Parkinson disease; uncertain significance; impaired ATPase flippase activity; dbSNP:rs192890224." evidence="9">
    <original>V</original>
    <variation>L</variation>
    <location>
        <position position="748"/>
    </location>
</feature>
<feature type="sequence variant" id="VAR_084149" description="Found in patients with early-onset Parkinson disease; uncertain significance; impaired ATPase flippase activity; dbSNP:rs61734665." evidence="9 10">
    <original>N</original>
    <variation>K</variation>
    <location>
        <position position="865"/>
    </location>
</feature>
<feature type="sequence variant" id="VAR_084150" description="Found in a patient with early-onset Parkinson disease; uncertain significance; impaired ATPase flippase activity; dbSNP:rs761562566." evidence="9">
    <original>E</original>
    <variation>A</variation>
    <location>
        <position position="993"/>
    </location>
</feature>
<feature type="sequence variant" id="VAR_084151" description="Found in a patient with early-onset Parkinson disease; uncertain significance; impaired ATPase flippase activity." evidence="9">
    <original>I</original>
    <variation>T</variation>
    <location>
        <position position="1038"/>
    </location>
</feature>
<feature type="sequence variant" id="VAR_084152" description="Found in a patient with early-onset Parkinson disease; uncertain significance; has no effect on ATPase flippase activity; dbSNP:rs144497343." evidence="9">
    <original>I</original>
    <variation>T</variation>
    <location>
        <position position="1222"/>
    </location>
</feature>
<feature type="sequence variant" id="VAR_084153" description="Found in patients with Parkinson disease; uncertain significance; dbSNP:rs61734664." evidence="9 10">
    <original>L</original>
    <variation>F</variation>
    <location>
        <position position="1421"/>
    </location>
</feature>
<feature type="mutagenesis site" description="Loss of ATPase flippase activity." evidence="9">
    <original>E</original>
    <variation>A</variation>
    <location>
        <position position="210"/>
    </location>
</feature>
<feature type="mutagenesis site" description="Abolishes autophosphorylation and ATPase flippase activity." evidence="9">
    <original>D</original>
    <variation>N</variation>
    <location>
        <position position="433"/>
    </location>
</feature>
<feature type="sequence conflict" description="In Ref. 3; BAC03528." evidence="13" ref="3">
    <original>F</original>
    <variation>S</variation>
    <location>
        <position position="234"/>
    </location>
</feature>
<name>AT10B_HUMAN</name>
<keyword id="KW-0025">Alternative splicing</keyword>
<keyword id="KW-0067">ATP-binding</keyword>
<keyword id="KW-0256">Endoplasmic reticulum</keyword>
<keyword id="KW-0967">Endosome</keyword>
<keyword id="KW-0445">Lipid transport</keyword>
<keyword id="KW-0458">Lysosome</keyword>
<keyword id="KW-0460">Magnesium</keyword>
<keyword id="KW-0472">Membrane</keyword>
<keyword id="KW-0479">Metal-binding</keyword>
<keyword id="KW-0547">Nucleotide-binding</keyword>
<keyword id="KW-1267">Proteomics identification</keyword>
<keyword id="KW-1185">Reference proteome</keyword>
<keyword id="KW-1278">Translocase</keyword>
<keyword id="KW-0812">Transmembrane</keyword>
<keyword id="KW-1133">Transmembrane helix</keyword>
<keyword id="KW-0813">Transport</keyword>
<reference key="1">
    <citation type="journal article" date="1998" name="DNA Res.">
        <title>Prediction of the coding sequences of unidentified human genes. XI. The complete sequences of 100 new cDNA clones from brain which code for large proteins in vitro.</title>
        <authorList>
            <person name="Nagase T."/>
            <person name="Ishikawa K."/>
            <person name="Suyama M."/>
            <person name="Kikuno R."/>
            <person name="Miyajima N."/>
            <person name="Tanaka A."/>
            <person name="Kotani H."/>
            <person name="Nomura N."/>
            <person name="Ohara O."/>
        </authorList>
    </citation>
    <scope>NUCLEOTIDE SEQUENCE [LARGE SCALE MRNA] (ISOFORM A)</scope>
    <source>
        <tissue>Brain</tissue>
    </source>
</reference>
<reference key="2">
    <citation type="submission" date="2005-04" db="EMBL/GenBank/DDBJ databases">
        <authorList>
            <person name="Ohara O."/>
            <person name="Suyama M."/>
            <person name="Nagase T."/>
            <person name="Ishikawa K."/>
            <person name="Kikuno R."/>
        </authorList>
    </citation>
    <scope>SEQUENCE REVISION</scope>
</reference>
<reference key="3">
    <citation type="journal article" date="2004" name="Nat. Genet.">
        <title>Complete sequencing and characterization of 21,243 full-length human cDNAs.</title>
        <authorList>
            <person name="Ota T."/>
            <person name="Suzuki Y."/>
            <person name="Nishikawa T."/>
            <person name="Otsuki T."/>
            <person name="Sugiyama T."/>
            <person name="Irie R."/>
            <person name="Wakamatsu A."/>
            <person name="Hayashi K."/>
            <person name="Sato H."/>
            <person name="Nagai K."/>
            <person name="Kimura K."/>
            <person name="Makita H."/>
            <person name="Sekine M."/>
            <person name="Obayashi M."/>
            <person name="Nishi T."/>
            <person name="Shibahara T."/>
            <person name="Tanaka T."/>
            <person name="Ishii S."/>
            <person name="Yamamoto J."/>
            <person name="Saito K."/>
            <person name="Kawai Y."/>
            <person name="Isono Y."/>
            <person name="Nakamura Y."/>
            <person name="Nagahari K."/>
            <person name="Murakami K."/>
            <person name="Yasuda T."/>
            <person name="Iwayanagi T."/>
            <person name="Wagatsuma M."/>
            <person name="Shiratori A."/>
            <person name="Sudo H."/>
            <person name="Hosoiri T."/>
            <person name="Kaku Y."/>
            <person name="Kodaira H."/>
            <person name="Kondo H."/>
            <person name="Sugawara M."/>
            <person name="Takahashi M."/>
            <person name="Kanda K."/>
            <person name="Yokoi T."/>
            <person name="Furuya T."/>
            <person name="Kikkawa E."/>
            <person name="Omura Y."/>
            <person name="Abe K."/>
            <person name="Kamihara K."/>
            <person name="Katsuta N."/>
            <person name="Sato K."/>
            <person name="Tanikawa M."/>
            <person name="Yamazaki M."/>
            <person name="Ninomiya K."/>
            <person name="Ishibashi T."/>
            <person name="Yamashita H."/>
            <person name="Murakawa K."/>
            <person name="Fujimori K."/>
            <person name="Tanai H."/>
            <person name="Kimata M."/>
            <person name="Watanabe M."/>
            <person name="Hiraoka S."/>
            <person name="Chiba Y."/>
            <person name="Ishida S."/>
            <person name="Ono Y."/>
            <person name="Takiguchi S."/>
            <person name="Watanabe S."/>
            <person name="Yosida M."/>
            <person name="Hotuta T."/>
            <person name="Kusano J."/>
            <person name="Kanehori K."/>
            <person name="Takahashi-Fujii A."/>
            <person name="Hara H."/>
            <person name="Tanase T.-O."/>
            <person name="Nomura Y."/>
            <person name="Togiya S."/>
            <person name="Komai F."/>
            <person name="Hara R."/>
            <person name="Takeuchi K."/>
            <person name="Arita M."/>
            <person name="Imose N."/>
            <person name="Musashino K."/>
            <person name="Yuuki H."/>
            <person name="Oshima A."/>
            <person name="Sasaki N."/>
            <person name="Aotsuka S."/>
            <person name="Yoshikawa Y."/>
            <person name="Matsunawa H."/>
            <person name="Ichihara T."/>
            <person name="Shiohata N."/>
            <person name="Sano S."/>
            <person name="Moriya S."/>
            <person name="Momiyama H."/>
            <person name="Satoh N."/>
            <person name="Takami S."/>
            <person name="Terashima Y."/>
            <person name="Suzuki O."/>
            <person name="Nakagawa S."/>
            <person name="Senoh A."/>
            <person name="Mizoguchi H."/>
            <person name="Goto Y."/>
            <person name="Shimizu F."/>
            <person name="Wakebe H."/>
            <person name="Hishigaki H."/>
            <person name="Watanabe T."/>
            <person name="Sugiyama A."/>
            <person name="Takemoto M."/>
            <person name="Kawakami B."/>
            <person name="Yamazaki M."/>
            <person name="Watanabe K."/>
            <person name="Kumagai A."/>
            <person name="Itakura S."/>
            <person name="Fukuzumi Y."/>
            <person name="Fujimori Y."/>
            <person name="Komiyama M."/>
            <person name="Tashiro H."/>
            <person name="Tanigami A."/>
            <person name="Fujiwara T."/>
            <person name="Ono T."/>
            <person name="Yamada K."/>
            <person name="Fujii Y."/>
            <person name="Ozaki K."/>
            <person name="Hirao M."/>
            <person name="Ohmori Y."/>
            <person name="Kawabata A."/>
            <person name="Hikiji T."/>
            <person name="Kobatake N."/>
            <person name="Inagaki H."/>
            <person name="Ikema Y."/>
            <person name="Okamoto S."/>
            <person name="Okitani R."/>
            <person name="Kawakami T."/>
            <person name="Noguchi S."/>
            <person name="Itoh T."/>
            <person name="Shigeta K."/>
            <person name="Senba T."/>
            <person name="Matsumura K."/>
            <person name="Nakajima Y."/>
            <person name="Mizuno T."/>
            <person name="Morinaga M."/>
            <person name="Sasaki M."/>
            <person name="Togashi T."/>
            <person name="Oyama M."/>
            <person name="Hata H."/>
            <person name="Watanabe M."/>
            <person name="Komatsu T."/>
            <person name="Mizushima-Sugano J."/>
            <person name="Satoh T."/>
            <person name="Shirai Y."/>
            <person name="Takahashi Y."/>
            <person name="Nakagawa K."/>
            <person name="Okumura K."/>
            <person name="Nagase T."/>
            <person name="Nomura N."/>
            <person name="Kikuchi H."/>
            <person name="Masuho Y."/>
            <person name="Yamashita R."/>
            <person name="Nakai K."/>
            <person name="Yada T."/>
            <person name="Nakamura Y."/>
            <person name="Ohara O."/>
            <person name="Isogai T."/>
            <person name="Sugano S."/>
        </authorList>
    </citation>
    <scope>NUCLEOTIDE SEQUENCE [LARGE SCALE MRNA] (ISOFORMS B AND C)</scope>
    <scope>VARIANT ARG-217</scope>
    <source>
        <tissue>Amygdala</tissue>
        <tissue>Colon</tissue>
    </source>
</reference>
<reference key="4">
    <citation type="journal article" date="2004" name="Nature">
        <title>The DNA sequence and comparative analysis of human chromosome 5.</title>
        <authorList>
            <person name="Schmutz J."/>
            <person name="Martin J."/>
            <person name="Terry A."/>
            <person name="Couronne O."/>
            <person name="Grimwood J."/>
            <person name="Lowry S."/>
            <person name="Gordon L.A."/>
            <person name="Scott D."/>
            <person name="Xie G."/>
            <person name="Huang W."/>
            <person name="Hellsten U."/>
            <person name="Tran-Gyamfi M."/>
            <person name="She X."/>
            <person name="Prabhakar S."/>
            <person name="Aerts A."/>
            <person name="Altherr M."/>
            <person name="Bajorek E."/>
            <person name="Black S."/>
            <person name="Branscomb E."/>
            <person name="Caoile C."/>
            <person name="Challacombe J.F."/>
            <person name="Chan Y.M."/>
            <person name="Denys M."/>
            <person name="Detter J.C."/>
            <person name="Escobar J."/>
            <person name="Flowers D."/>
            <person name="Fotopulos D."/>
            <person name="Glavina T."/>
            <person name="Gomez M."/>
            <person name="Gonzales E."/>
            <person name="Goodstein D."/>
            <person name="Grigoriev I."/>
            <person name="Groza M."/>
            <person name="Hammon N."/>
            <person name="Hawkins T."/>
            <person name="Haydu L."/>
            <person name="Israni S."/>
            <person name="Jett J."/>
            <person name="Kadner K."/>
            <person name="Kimball H."/>
            <person name="Kobayashi A."/>
            <person name="Lopez F."/>
            <person name="Lou Y."/>
            <person name="Martinez D."/>
            <person name="Medina C."/>
            <person name="Morgan J."/>
            <person name="Nandkeshwar R."/>
            <person name="Noonan J.P."/>
            <person name="Pitluck S."/>
            <person name="Pollard M."/>
            <person name="Predki P."/>
            <person name="Priest J."/>
            <person name="Ramirez L."/>
            <person name="Retterer J."/>
            <person name="Rodriguez A."/>
            <person name="Rogers S."/>
            <person name="Salamov A."/>
            <person name="Salazar A."/>
            <person name="Thayer N."/>
            <person name="Tice H."/>
            <person name="Tsai M."/>
            <person name="Ustaszewska A."/>
            <person name="Vo N."/>
            <person name="Wheeler J."/>
            <person name="Wu K."/>
            <person name="Yang J."/>
            <person name="Dickson M."/>
            <person name="Cheng J.-F."/>
            <person name="Eichler E.E."/>
            <person name="Olsen A."/>
            <person name="Pennacchio L.A."/>
            <person name="Rokhsar D.S."/>
            <person name="Richardson P."/>
            <person name="Lucas S.M."/>
            <person name="Myers R.M."/>
            <person name="Rubin E.M."/>
        </authorList>
    </citation>
    <scope>NUCLEOTIDE SEQUENCE [LARGE SCALE GENOMIC DNA]</scope>
</reference>
<reference key="5">
    <citation type="journal article" date="2015" name="J. Biol. Chem.">
        <title>Phospholipid Flippase ATP10A Translocates Phosphatidylcholine and Is Involved in Plasma Membrane Dynamics.</title>
        <authorList>
            <person name="Naito T."/>
            <person name="Takatsu H."/>
            <person name="Miyano R."/>
            <person name="Takada N."/>
            <person name="Nakayama K."/>
            <person name="Shin H.W."/>
        </authorList>
    </citation>
    <scope>SUBCELLULAR LOCATION</scope>
    <scope>INTERACTION WITH TMEM30A</scope>
</reference>
<reference key="6">
    <citation type="journal article" date="2020" name="Acta Neuropathol.">
        <title>Mutated ATP10B increases Parkinson's disease risk by compromising lysosomal glucosylceramide export.</title>
        <authorList>
            <consortium name="BELNEU consortium"/>
            <person name="Martin S."/>
            <person name="Smolders S."/>
            <person name="Van den Haute C."/>
            <person name="Heeman B."/>
            <person name="van Veen S."/>
            <person name="Crosiers D."/>
            <person name="Beletchi I."/>
            <person name="Verstraeten A."/>
            <person name="Gossye H."/>
            <person name="Gelders G."/>
            <person name="Pals P."/>
            <person name="Hamouda N.N."/>
            <person name="Engelborghs S."/>
            <person name="Martin J.J."/>
            <person name="Eggermont J."/>
            <person name="De Deyn P.P."/>
            <person name="Cras P."/>
            <person name="Baekelandt V."/>
            <person name="Vangheluwe P."/>
            <person name="Van Broeckhoven C."/>
        </authorList>
    </citation>
    <scope>FUNCTION</scope>
    <scope>CATALYTIC ACTIVITY</scope>
    <scope>TISSUE SPECIFICITY</scope>
    <scope>SUBCELLULAR LOCATION</scope>
    <scope>PTM</scope>
    <scope>ACTIVE SITE</scope>
    <scope>VARIANTS SER-105; 153-ARG--ILE-1461 DEL; ASN-161; TRP-393; VAL-558; ARG-648; ARG-671; LEU-748; LYS-865; ALA-993; THR-1038; THR-1222 AND PHE-1421</scope>
    <scope>MUTAGENESIS OF GLU-210 AND ASP-433</scope>
</reference>
<reference key="7">
    <citation type="journal article" date="2020" name="Acta Neuropathol.">
        <title>Segregation of ATP10B variants in families with autosomal recessive parkinsonism.</title>
        <authorList>
            <person name="Tesson C."/>
            <person name="Lohmann E."/>
            <person name="Devos D."/>
            <person name="Bertrand H."/>
            <person name="Lesage S."/>
            <person name="Brice A."/>
        </authorList>
    </citation>
    <scope>VARIANTS MET-219; THR-540; ARG-671; LYS-865 AND PHE-1421</scope>
</reference>
<accession>O94823</accession>
<accession>Q9H725</accession>
<organism>
    <name type="scientific">Homo sapiens</name>
    <name type="common">Human</name>
    <dbReference type="NCBI Taxonomy" id="9606"/>
    <lineage>
        <taxon>Eukaryota</taxon>
        <taxon>Metazoa</taxon>
        <taxon>Chordata</taxon>
        <taxon>Craniata</taxon>
        <taxon>Vertebrata</taxon>
        <taxon>Euteleostomi</taxon>
        <taxon>Mammalia</taxon>
        <taxon>Eutheria</taxon>
        <taxon>Euarchontoglires</taxon>
        <taxon>Primates</taxon>
        <taxon>Haplorrhini</taxon>
        <taxon>Catarrhini</taxon>
        <taxon>Hominidae</taxon>
        <taxon>Homo</taxon>
    </lineage>
</organism>
<protein>
    <recommendedName>
        <fullName>Phospholipid-transporting ATPase VB</fullName>
        <ecNumber evidence="9">7.6.2.1</ecNumber>
    </recommendedName>
    <alternativeName>
        <fullName>ATPase class V type 10B</fullName>
    </alternativeName>
    <alternativeName>
        <fullName>P4-ATPase flippase complex alpha subunit ATP10B</fullName>
    </alternativeName>
</protein>
<comment type="function">
    <text evidence="9">Catalytic component of a P4-ATPase flippase complex, which catalyzes the hydrolysis of ATP coupled to the transport of glucosylceramide (GlcCer) from the outer to the inner leaflet of lysosome membranes. Plays an important role in the maintenance of lysosome membrane integrity and function in cortical neurons.</text>
</comment>
<comment type="catalytic activity">
    <reaction evidence="9">
        <text>ATP + H2O + phospholipidSide 1 = ADP + phosphate + phospholipidSide 2.</text>
        <dbReference type="EC" id="7.6.2.1"/>
    </reaction>
</comment>
<comment type="catalytic activity">
    <reaction evidence="9">
        <text>a beta-D-glucosyl-(1&lt;-&gt;1')-N-acylsphing-4-enine(out) + ATP + H2O = a beta-D-glucosyl-(1&lt;-&gt;1')-N-acylsphing-4-enine(in) + ADP + phosphate + H(+)</text>
        <dbReference type="Rhea" id="RHEA:66036"/>
        <dbReference type="ChEBI" id="CHEBI:15377"/>
        <dbReference type="ChEBI" id="CHEBI:15378"/>
        <dbReference type="ChEBI" id="CHEBI:22801"/>
        <dbReference type="ChEBI" id="CHEBI:30616"/>
        <dbReference type="ChEBI" id="CHEBI:43474"/>
        <dbReference type="ChEBI" id="CHEBI:456216"/>
    </reaction>
    <physiologicalReaction direction="left-to-right" evidence="14">
        <dbReference type="Rhea" id="RHEA:66037"/>
    </physiologicalReaction>
</comment>
<comment type="cofactor">
    <cofactor evidence="4">
        <name>Mg(2+)</name>
        <dbReference type="ChEBI" id="CHEBI:18420"/>
    </cofactor>
</comment>
<comment type="subunit">
    <text evidence="8">Component of a P4-ATPase flippase complex which consists of a catalytic alpha subunit ATP10B and an accessory beta subunit TMEM30A.</text>
</comment>
<comment type="interaction">
    <interactant intactId="EBI-26444823">
        <id>O94823-1</id>
    </interactant>
    <interactant intactId="EBI-26444832">
        <id>Q9NV96-1</id>
        <label>TMEM30A</label>
    </interactant>
    <organismsDiffer>false</organismsDiffer>
    <experiments>2</experiments>
</comment>
<comment type="subcellular location">
    <subcellularLocation>
        <location evidence="8 9">Late endosome membrane</location>
        <topology evidence="5">Multi-pass membrane protein</topology>
    </subcellularLocation>
    <subcellularLocation>
        <location evidence="8 9">Lysosome membrane</location>
        <topology evidence="5">Multi-pass membrane protein</topology>
    </subcellularLocation>
    <subcellularLocation>
        <location evidence="8">Endoplasmic reticulum membrane</location>
        <topology evidence="5">Multi-pass membrane protein</topology>
    </subcellularLocation>
    <text>Exit from the endoplasmic reticulum requires the presence of TMEM30A, but not TMEM30B.</text>
</comment>
<comment type="alternative products">
    <event type="alternative splicing"/>
    <isoform>
        <id>O94823-1</id>
        <name>A</name>
        <sequence type="displayed"/>
    </isoform>
    <isoform>
        <id>O94823-2</id>
        <name>B</name>
        <sequence type="described" ref="VSP_007306 VSP_007307"/>
    </isoform>
    <isoform>
        <id>O94823-3</id>
        <name>C</name>
        <sequence type="described" ref="VSP_007305 VSP_007306 VSP_007307"/>
    </isoform>
</comment>
<comment type="tissue specificity">
    <text evidence="9">Expressed in predominantly in brain structures including medulla oblongata, substantia nigra and basal ganglia. Expressed in the gastrointestinal system with highest levels in the small intestine and colon. Also expressed at low levels in testis and thymus.</text>
</comment>
<comment type="PTM">
    <text evidence="9">Autophosphorylated at the conserved aspartate of the P-type ATPase signature sequence.</text>
</comment>
<comment type="similarity">
    <text evidence="13">Belongs to the cation transport ATPase (P-type) (TC 3.A.3) family. Type IV subfamily.</text>
</comment>
<comment type="sequence caution" evidence="13">
    <conflict type="erroneous initiation">
        <sequence resource="EMBL-CDS" id="BAA34435"/>
    </conflict>
</comment>
<evidence type="ECO:0000250" key="1">
    <source>
        <dbReference type="UniProtKB" id="P04191"/>
    </source>
</evidence>
<evidence type="ECO:0000250" key="2">
    <source>
        <dbReference type="UniProtKB" id="Q8NB49"/>
    </source>
</evidence>
<evidence type="ECO:0000250" key="3">
    <source>
        <dbReference type="UniProtKB" id="Q9HD20"/>
    </source>
</evidence>
<evidence type="ECO:0000250" key="4">
    <source>
        <dbReference type="UniProtKB" id="Q9Y2Q0"/>
    </source>
</evidence>
<evidence type="ECO:0000255" key="5"/>
<evidence type="ECO:0000256" key="6">
    <source>
        <dbReference type="SAM" id="MobiDB-lite"/>
    </source>
</evidence>
<evidence type="ECO:0000269" key="7">
    <source>
    </source>
</evidence>
<evidence type="ECO:0000269" key="8">
    <source>
    </source>
</evidence>
<evidence type="ECO:0000269" key="9">
    <source>
    </source>
</evidence>
<evidence type="ECO:0000269" key="10">
    <source>
    </source>
</evidence>
<evidence type="ECO:0000303" key="11">
    <source>
    </source>
</evidence>
<evidence type="ECO:0000303" key="12">
    <source>
    </source>
</evidence>
<evidence type="ECO:0000305" key="13"/>
<evidence type="ECO:0000305" key="14">
    <source>
    </source>
</evidence>
<sequence length="1461" mass="165391">MALSVDSSWHRWQWRVRDGFPHCPSETTPLLSPEKGRQSYNLTQQRVVFPNNSIFHQDWEEVSRRYPGNRTCTTKYTLFTFLPRNLFEQFHRWANLYFLFLVILNWMPSMEVFHREITMLPLAIVLFVIMIKDGMEDFKRHRFDKAINCSNIRIYERKEQTYVQKCWKDVRVGDFIQMKCNEIVPADILLLFSSDPNGICHLETASLDGETNLKQRCVVKGFSQQEVQFEPELFHNTIVCEKPNNHLNKFKGYMEHPDQTRTGFGCESLLLRGCTIRNTEMAVGIVIYAGHETKAMLNNSGPRYKRSKIERRMNIDIFFCIGILILMCLIGAVGHSIWNGTFEEHPPFDVPDANGSFLPSALGGFYMFLTMIILLQVLIPISLYVSIELVKLGQVFFLSNDLDLYDEETDLSIQCRALNIAEDLGQIQYIFSDKTGTLTENKMVFRRCTIMGSEYSHQENAKRLETPKELDSDGEEWTQYQCLSFSARWAQDPATMRSQKGAQPLRRSQSARVPIQGHYRQRSMGHRESSQPPVAFSSSIEKDVTPDKNLLTKVRDAALWLETLSDSRPAKASLSTTSSIADFFLALTICNSVMVSTTTEPRQRVTIKPSSKALGTSLEKIQQLFQKLKLLSLSQSFSSTAPSDTDLGESLGANVATTDSDERDDASVCSGGDSTDDGGYRSSMWDQGDILESGSGTSLEEALEAPATDLARPEFCYEAESPDEAALVHAAHAYSFTLVSRTPEQVTVRLPQGTCLTFSLLCTLGFDSVRKRMSVVVRHPLTGEIVVYTKGADSVIMDLLEDPACVPDINMEKKLRKIRARTQKHLDLYARDGLRTLCIAKKVVSEEDFRRWASFRREAEASLDNRDELLMETAQHLENQLTLLGATGIEDRLQEGVPDTIATLREAGIQLWVLTGDKQETAVNIAHSCRLLNQTDTVYTINTENQETCESILNCALEELKQFRELQKPDRKLFGFRLPSKTPSITSEAVVPEAGLVIDGKTLNAIFQGKLEKKFLELTQYCRSVLCCRSTPLQKSMIVKLVRDKLRVMTLSIGDGANDVSMIQAADIGIGISGQEGMQAVMSSDFAITRFKHLKKLLLVHGHWCYSRLARMVVYYLYKNVCYVNLLFWYQFFCGFSSSTMIDYWQMIFFNLFFTSLPPLVFGVLDKDISAETLLALPELYKSGQNSECYNLSTFWISMVDAFYQSLICFFIPYLAYKGSDIDVFTFGTPINTISLTTILLHQAMEMKTWTIFHGVVLLGSFLMYFLVSLLYNATCVICNSPTNPYWVMEGQLSNPTFYLVCFLTPVVALLPRYFFLSLQGTCGKSLISKAQKIDKLPPDKRNLEIQSWRSRQRPAPVPEVARPTHHPVSSITGQDFSASTPKSSNPPKRKHVEESVLHEQRCGTECMRDDSCSGDSSAQLSSGEHLLGPNRIMAYSRGQTDMCRCSKRSSHRRSQSSLTI</sequence>
<dbReference type="EC" id="7.6.2.1" evidence="9"/>
<dbReference type="EMBL" id="AB018258">
    <property type="protein sequence ID" value="BAA34435.2"/>
    <property type="status" value="ALT_INIT"/>
    <property type="molecule type" value="mRNA"/>
</dbReference>
<dbReference type="EMBL" id="AK090832">
    <property type="protein sequence ID" value="BAC03528.1"/>
    <property type="molecule type" value="mRNA"/>
</dbReference>
<dbReference type="EMBL" id="AK025130">
    <property type="protein sequence ID" value="BAB15074.1"/>
    <property type="molecule type" value="mRNA"/>
</dbReference>
<dbReference type="EMBL" id="AC008456">
    <property type="status" value="NOT_ANNOTATED_CDS"/>
    <property type="molecule type" value="Genomic_DNA"/>
</dbReference>
<dbReference type="CCDS" id="CCDS43394.1">
    <molecule id="O94823-1"/>
</dbReference>
<dbReference type="RefSeq" id="NP_001353581.1">
    <molecule id="O94823-1"/>
    <property type="nucleotide sequence ID" value="NM_001366652.1"/>
</dbReference>
<dbReference type="RefSeq" id="NP_001353582.1">
    <molecule id="O94823-2"/>
    <property type="nucleotide sequence ID" value="NM_001366653.2"/>
</dbReference>
<dbReference type="RefSeq" id="NP_001353584.1">
    <molecule id="O94823-1"/>
    <property type="nucleotide sequence ID" value="NM_001366655.1"/>
</dbReference>
<dbReference type="RefSeq" id="NP_001353585.1">
    <molecule id="O94823-2"/>
    <property type="nucleotide sequence ID" value="NM_001366656.2"/>
</dbReference>
<dbReference type="RefSeq" id="NP_001353587.1">
    <molecule id="O94823-3"/>
    <property type="nucleotide sequence ID" value="NM_001366658.2"/>
</dbReference>
<dbReference type="RefSeq" id="NP_079429.2">
    <molecule id="O94823-1"/>
    <property type="nucleotide sequence ID" value="NM_025153.3"/>
</dbReference>
<dbReference type="RefSeq" id="XP_006714896.1">
    <property type="nucleotide sequence ID" value="XM_006714833.2"/>
</dbReference>
<dbReference type="RefSeq" id="XP_011532770.1">
    <molecule id="O94823-1"/>
    <property type="nucleotide sequence ID" value="XM_011534468.3"/>
</dbReference>
<dbReference type="RefSeq" id="XP_011532771.1">
    <molecule id="O94823-1"/>
    <property type="nucleotide sequence ID" value="XM_011534469.2"/>
</dbReference>
<dbReference type="RefSeq" id="XP_047272950.1">
    <molecule id="O94823-1"/>
    <property type="nucleotide sequence ID" value="XM_047416994.1"/>
</dbReference>
<dbReference type="SMR" id="O94823"/>
<dbReference type="BioGRID" id="116742">
    <property type="interactions" value="5"/>
</dbReference>
<dbReference type="ComplexPortal" id="CPX-6308">
    <property type="entry name" value="ATP10B-CDC50A P4-ATPase complex"/>
</dbReference>
<dbReference type="FunCoup" id="O94823">
    <property type="interactions" value="272"/>
</dbReference>
<dbReference type="IntAct" id="O94823">
    <property type="interactions" value="2"/>
</dbReference>
<dbReference type="STRING" id="9606.ENSP00000313600"/>
<dbReference type="GlyGen" id="O94823">
    <property type="glycosylation" value="3 sites, 1 O-linked glycan (3 sites)"/>
</dbReference>
<dbReference type="iPTMnet" id="O94823"/>
<dbReference type="PhosphoSitePlus" id="O94823"/>
<dbReference type="BioMuta" id="ATP10B"/>
<dbReference type="jPOST" id="O94823"/>
<dbReference type="MassIVE" id="O94823"/>
<dbReference type="PaxDb" id="9606-ENSP00000313600"/>
<dbReference type="PeptideAtlas" id="O94823"/>
<dbReference type="ProteomicsDB" id="50465">
    <molecule id="O94823-1"/>
</dbReference>
<dbReference type="ProteomicsDB" id="50466">
    <molecule id="O94823-2"/>
</dbReference>
<dbReference type="ProteomicsDB" id="50467">
    <molecule id="O94823-3"/>
</dbReference>
<dbReference type="Antibodypedia" id="48726">
    <property type="antibodies" value="14 antibodies from 7 providers"/>
</dbReference>
<dbReference type="DNASU" id="23120"/>
<dbReference type="Ensembl" id="ENST00000327245.10">
    <molecule id="O94823-1"/>
    <property type="protein sequence ID" value="ENSP00000313600.5"/>
    <property type="gene ID" value="ENSG00000118322.14"/>
</dbReference>
<dbReference type="GeneID" id="23120"/>
<dbReference type="KEGG" id="hsa:23120"/>
<dbReference type="MANE-Select" id="ENST00000327245.10">
    <property type="protein sequence ID" value="ENSP00000313600.5"/>
    <property type="RefSeq nucleotide sequence ID" value="NM_025153.3"/>
    <property type="RefSeq protein sequence ID" value="NP_079429.2"/>
</dbReference>
<dbReference type="UCSC" id="uc003lym.1">
    <molecule id="O94823-1"/>
    <property type="organism name" value="human"/>
</dbReference>
<dbReference type="AGR" id="HGNC:13543"/>
<dbReference type="CTD" id="23120"/>
<dbReference type="DisGeNET" id="23120"/>
<dbReference type="GeneCards" id="ATP10B"/>
<dbReference type="HGNC" id="HGNC:13543">
    <property type="gene designation" value="ATP10B"/>
</dbReference>
<dbReference type="HPA" id="ENSG00000118322">
    <property type="expression patterns" value="Tissue enhanced (gallbladder, intestine)"/>
</dbReference>
<dbReference type="MIM" id="619791">
    <property type="type" value="gene"/>
</dbReference>
<dbReference type="neXtProt" id="NX_O94823"/>
<dbReference type="OpenTargets" id="ENSG00000118322"/>
<dbReference type="PharmGKB" id="PA25098"/>
<dbReference type="VEuPathDB" id="HostDB:ENSG00000118322"/>
<dbReference type="eggNOG" id="KOG0206">
    <property type="taxonomic scope" value="Eukaryota"/>
</dbReference>
<dbReference type="GeneTree" id="ENSGT00940000159531"/>
<dbReference type="InParanoid" id="O94823"/>
<dbReference type="OMA" id="DMMIYQR"/>
<dbReference type="OrthoDB" id="377733at2759"/>
<dbReference type="PAN-GO" id="O94823">
    <property type="GO annotations" value="3 GO annotations based on evolutionary models"/>
</dbReference>
<dbReference type="PhylomeDB" id="O94823"/>
<dbReference type="TreeFam" id="TF354252"/>
<dbReference type="BRENDA" id="7.6.2.1">
    <property type="organism ID" value="2681"/>
</dbReference>
<dbReference type="PathwayCommons" id="O94823"/>
<dbReference type="Reactome" id="R-HSA-936837">
    <property type="pathway name" value="Ion transport by P-type ATPases"/>
</dbReference>
<dbReference type="SignaLink" id="O94823"/>
<dbReference type="BioGRID-ORCS" id="23120">
    <property type="hits" value="48 hits in 1144 CRISPR screens"/>
</dbReference>
<dbReference type="ChiTaRS" id="ATP10B">
    <property type="organism name" value="human"/>
</dbReference>
<dbReference type="GenomeRNAi" id="23120"/>
<dbReference type="Pharos" id="O94823">
    <property type="development level" value="Tdark"/>
</dbReference>
<dbReference type="PRO" id="PR:O94823"/>
<dbReference type="Proteomes" id="UP000005640">
    <property type="component" value="Chromosome 5"/>
</dbReference>
<dbReference type="RNAct" id="O94823">
    <property type="molecule type" value="protein"/>
</dbReference>
<dbReference type="Bgee" id="ENSG00000118322">
    <property type="expression patterns" value="Expressed in mucosa of sigmoid colon and 157 other cell types or tissues"/>
</dbReference>
<dbReference type="ExpressionAtlas" id="O94823">
    <property type="expression patterns" value="baseline and differential"/>
</dbReference>
<dbReference type="GO" id="GO:0005783">
    <property type="term" value="C:endoplasmic reticulum"/>
    <property type="evidence" value="ECO:0000314"/>
    <property type="project" value="UniProtKB"/>
</dbReference>
<dbReference type="GO" id="GO:0005789">
    <property type="term" value="C:endoplasmic reticulum membrane"/>
    <property type="evidence" value="ECO:0007669"/>
    <property type="project" value="UniProtKB-SubCell"/>
</dbReference>
<dbReference type="GO" id="GO:0031902">
    <property type="term" value="C:late endosome membrane"/>
    <property type="evidence" value="ECO:0000314"/>
    <property type="project" value="ComplexPortal"/>
</dbReference>
<dbReference type="GO" id="GO:0005765">
    <property type="term" value="C:lysosomal membrane"/>
    <property type="evidence" value="ECO:0000314"/>
    <property type="project" value="UniProtKB"/>
</dbReference>
<dbReference type="GO" id="GO:0016020">
    <property type="term" value="C:membrane"/>
    <property type="evidence" value="ECO:0000314"/>
    <property type="project" value="ComplexPortal"/>
</dbReference>
<dbReference type="GO" id="GO:1990531">
    <property type="term" value="C:phospholipid-translocating ATPase complex"/>
    <property type="evidence" value="ECO:0000314"/>
    <property type="project" value="UniProtKB"/>
</dbReference>
<dbReference type="GO" id="GO:0005886">
    <property type="term" value="C:plasma membrane"/>
    <property type="evidence" value="ECO:0000318"/>
    <property type="project" value="GO_Central"/>
</dbReference>
<dbReference type="GO" id="GO:0005524">
    <property type="term" value="F:ATP binding"/>
    <property type="evidence" value="ECO:0007669"/>
    <property type="project" value="UniProtKB-KW"/>
</dbReference>
<dbReference type="GO" id="GO:0016887">
    <property type="term" value="F:ATP hydrolysis activity"/>
    <property type="evidence" value="ECO:0007669"/>
    <property type="project" value="InterPro"/>
</dbReference>
<dbReference type="GO" id="GO:0140326">
    <property type="term" value="F:ATPase-coupled intramembrane lipid transporter activity"/>
    <property type="evidence" value="ECO:0000318"/>
    <property type="project" value="GO_Central"/>
</dbReference>
<dbReference type="GO" id="GO:0140351">
    <property type="term" value="F:glycosylceramide flippase activity"/>
    <property type="evidence" value="ECO:0000314"/>
    <property type="project" value="UniProtKB"/>
</dbReference>
<dbReference type="GO" id="GO:0000287">
    <property type="term" value="F:magnesium ion binding"/>
    <property type="evidence" value="ECO:0007669"/>
    <property type="project" value="InterPro"/>
</dbReference>
<dbReference type="GO" id="GO:0140345">
    <property type="term" value="F:phosphatidylcholine flippase activity"/>
    <property type="evidence" value="ECO:0000314"/>
    <property type="project" value="UniProtKB"/>
</dbReference>
<dbReference type="GO" id="GO:0097212">
    <property type="term" value="P:lysosomal membrane organization"/>
    <property type="evidence" value="ECO:0000314"/>
    <property type="project" value="UniProtKB"/>
</dbReference>
<dbReference type="GO" id="GO:0045332">
    <property type="term" value="P:phospholipid translocation"/>
    <property type="evidence" value="ECO:0000318"/>
    <property type="project" value="GO_Central"/>
</dbReference>
<dbReference type="CDD" id="cd02073">
    <property type="entry name" value="P-type_ATPase_APLT_Dnf-like"/>
    <property type="match status" value="1"/>
</dbReference>
<dbReference type="FunFam" id="2.70.150.10:FF:000022">
    <property type="entry name" value="Phospholipid-transporting ATPase"/>
    <property type="match status" value="1"/>
</dbReference>
<dbReference type="FunFam" id="3.40.1110.10:FF:000009">
    <property type="entry name" value="Phospholipid-transporting ATPase"/>
    <property type="match status" value="1"/>
</dbReference>
<dbReference type="FunFam" id="3.40.1110.10:FF:000024">
    <property type="entry name" value="Phospholipid-transporting ATPase"/>
    <property type="match status" value="1"/>
</dbReference>
<dbReference type="FunFam" id="3.40.50.1000:FF:000023">
    <property type="entry name" value="Phospholipid-transporting ATPase"/>
    <property type="match status" value="1"/>
</dbReference>
<dbReference type="FunFam" id="3.40.50.1000:FF:000001">
    <property type="entry name" value="Phospholipid-transporting ATPase IC"/>
    <property type="match status" value="1"/>
</dbReference>
<dbReference type="Gene3D" id="3.40.1110.10">
    <property type="entry name" value="Calcium-transporting ATPase, cytoplasmic domain N"/>
    <property type="match status" value="2"/>
</dbReference>
<dbReference type="Gene3D" id="2.70.150.10">
    <property type="entry name" value="Calcium-transporting ATPase, cytoplasmic transduction domain A"/>
    <property type="match status" value="1"/>
</dbReference>
<dbReference type="Gene3D" id="1.20.1110.10">
    <property type="entry name" value="Calcium-transporting ATPase, transmembrane domain"/>
    <property type="match status" value="1"/>
</dbReference>
<dbReference type="Gene3D" id="3.40.50.1000">
    <property type="entry name" value="HAD superfamily/HAD-like"/>
    <property type="match status" value="2"/>
</dbReference>
<dbReference type="InterPro" id="IPR023299">
    <property type="entry name" value="ATPase_P-typ_cyto_dom_N"/>
</dbReference>
<dbReference type="InterPro" id="IPR018303">
    <property type="entry name" value="ATPase_P-typ_P_site"/>
</dbReference>
<dbReference type="InterPro" id="IPR023298">
    <property type="entry name" value="ATPase_P-typ_TM_dom_sf"/>
</dbReference>
<dbReference type="InterPro" id="IPR008250">
    <property type="entry name" value="ATPase_P-typ_transduc_dom_A_sf"/>
</dbReference>
<dbReference type="InterPro" id="IPR036412">
    <property type="entry name" value="HAD-like_sf"/>
</dbReference>
<dbReference type="InterPro" id="IPR023214">
    <property type="entry name" value="HAD_sf"/>
</dbReference>
<dbReference type="InterPro" id="IPR006539">
    <property type="entry name" value="P-type_ATPase_IV"/>
</dbReference>
<dbReference type="InterPro" id="IPR032631">
    <property type="entry name" value="P-type_ATPase_N"/>
</dbReference>
<dbReference type="InterPro" id="IPR001757">
    <property type="entry name" value="P_typ_ATPase"/>
</dbReference>
<dbReference type="InterPro" id="IPR032630">
    <property type="entry name" value="P_typ_ATPase_c"/>
</dbReference>
<dbReference type="InterPro" id="IPR044492">
    <property type="entry name" value="P_typ_ATPase_HD_dom"/>
</dbReference>
<dbReference type="NCBIfam" id="TIGR01652">
    <property type="entry name" value="ATPase-Plipid"/>
    <property type="match status" value="2"/>
</dbReference>
<dbReference type="NCBIfam" id="TIGR01494">
    <property type="entry name" value="ATPase_P-type"/>
    <property type="match status" value="2"/>
</dbReference>
<dbReference type="PANTHER" id="PTHR24092:SF79">
    <property type="entry name" value="PHOSPHOLIPID-TRANSPORTING ATPASE VB"/>
    <property type="match status" value="1"/>
</dbReference>
<dbReference type="PANTHER" id="PTHR24092">
    <property type="entry name" value="PROBABLE PHOSPHOLIPID-TRANSPORTING ATPASE"/>
    <property type="match status" value="1"/>
</dbReference>
<dbReference type="Pfam" id="PF13246">
    <property type="entry name" value="Cation_ATPase"/>
    <property type="match status" value="1"/>
</dbReference>
<dbReference type="Pfam" id="PF16212">
    <property type="entry name" value="PhoLip_ATPase_C"/>
    <property type="match status" value="1"/>
</dbReference>
<dbReference type="Pfam" id="PF16209">
    <property type="entry name" value="PhoLip_ATPase_N"/>
    <property type="match status" value="1"/>
</dbReference>
<dbReference type="PRINTS" id="PR00119">
    <property type="entry name" value="CATATPASE"/>
</dbReference>
<dbReference type="SFLD" id="SFLDS00003">
    <property type="entry name" value="Haloacid_Dehalogenase"/>
    <property type="match status" value="1"/>
</dbReference>
<dbReference type="SFLD" id="SFLDF00027">
    <property type="entry name" value="p-type_atpase"/>
    <property type="match status" value="1"/>
</dbReference>
<dbReference type="SUPFAM" id="SSF81653">
    <property type="entry name" value="Calcium ATPase, transduction domain A"/>
    <property type="match status" value="1"/>
</dbReference>
<dbReference type="SUPFAM" id="SSF81665">
    <property type="entry name" value="Calcium ATPase, transmembrane domain M"/>
    <property type="match status" value="1"/>
</dbReference>
<dbReference type="SUPFAM" id="SSF56784">
    <property type="entry name" value="HAD-like"/>
    <property type="match status" value="1"/>
</dbReference>
<dbReference type="SUPFAM" id="SSF81660">
    <property type="entry name" value="Metal cation-transporting ATPase, ATP-binding domain N"/>
    <property type="match status" value="1"/>
</dbReference>
<dbReference type="PROSITE" id="PS00154">
    <property type="entry name" value="ATPASE_E1_E2"/>
    <property type="match status" value="1"/>
</dbReference>
<proteinExistence type="evidence at protein level"/>
<gene>
    <name evidence="12" type="primary">ATP10B</name>
    <name type="synonym">ATPVB</name>
    <name type="synonym">KIAA0715</name>
</gene>